<comment type="function">
    <text evidence="1">Catalyzes the decarboxylation of S-adenosylmethionine to S-adenosylmethioninamine (dcAdoMet), the propylamine donor required for the synthesis of the polyamines spermine and spermidine from the diamine putrescine.</text>
</comment>
<comment type="catalytic activity">
    <reaction evidence="1">
        <text>S-adenosyl-L-methionine + H(+) = S-adenosyl 3-(methylsulfanyl)propylamine + CO2</text>
        <dbReference type="Rhea" id="RHEA:15981"/>
        <dbReference type="ChEBI" id="CHEBI:15378"/>
        <dbReference type="ChEBI" id="CHEBI:16526"/>
        <dbReference type="ChEBI" id="CHEBI:57443"/>
        <dbReference type="ChEBI" id="CHEBI:59789"/>
        <dbReference type="EC" id="4.1.1.50"/>
    </reaction>
</comment>
<comment type="cofactor">
    <cofactor evidence="1">
        <name>pyruvate</name>
        <dbReference type="ChEBI" id="CHEBI:15361"/>
    </cofactor>
    <text evidence="1">Binds 1 pyruvoyl group covalently per subunit.</text>
</comment>
<comment type="pathway">
    <text evidence="1">Amine and polyamine biosynthesis; S-adenosylmethioninamine biosynthesis; S-adenosylmethioninamine from S-adenosyl-L-methionine: step 1/1.</text>
</comment>
<comment type="subunit">
    <text evidence="1">Heterooctamer of four alpha and four beta chains arranged as a tetramer of alpha/beta heterodimers.</text>
</comment>
<comment type="PTM">
    <text evidence="1">Is synthesized initially as an inactive proenzyme. Formation of the active enzyme involves a self-maturation process in which the active site pyruvoyl group is generated from an internal serine residue via an autocatalytic post-translational modification. Two non-identical subunits are generated from the proenzyme in this reaction, and the pyruvate is formed at the N-terminus of the alpha chain, which is derived from the carboxyl end of the proenzyme. The post-translation cleavage follows an unusual pathway, termed non-hydrolytic serinolysis, in which the side chain hydroxyl group of the serine supplies its oxygen atom to form the C-terminus of the beta chain, while the remainder of the serine residue undergoes an oxidative deamination to produce ammonia and the pyruvoyl group blocking the N-terminus of the alpha chain.</text>
</comment>
<comment type="similarity">
    <text evidence="1">Belongs to the prokaryotic AdoMetDC family. Type 2 subfamily.</text>
</comment>
<feature type="chain" id="PRO_1000135441" description="S-adenosylmethionine decarboxylase beta chain" evidence="1">
    <location>
        <begin position="1"/>
        <end position="123"/>
    </location>
</feature>
<feature type="chain" id="PRO_1000135442" description="S-adenosylmethionine decarboxylase alpha chain" evidence="1">
    <location>
        <begin position="124"/>
        <end position="276"/>
    </location>
</feature>
<feature type="active site" description="Schiff-base intermediate with substrate; via pyruvic acid" evidence="1">
    <location>
        <position position="124"/>
    </location>
</feature>
<feature type="active site" description="Proton acceptor; for processing activity" evidence="1">
    <location>
        <position position="129"/>
    </location>
</feature>
<feature type="active site" description="Proton donor; for catalytic activity" evidence="1">
    <location>
        <position position="152"/>
    </location>
</feature>
<feature type="site" description="Cleavage (non-hydrolytic); by autolysis" evidence="1">
    <location>
        <begin position="123"/>
        <end position="124"/>
    </location>
</feature>
<feature type="modified residue" description="Pyruvic acid (Ser); by autocatalysis" evidence="1">
    <location>
        <position position="124"/>
    </location>
</feature>
<evidence type="ECO:0000255" key="1">
    <source>
        <dbReference type="HAMAP-Rule" id="MF_00465"/>
    </source>
</evidence>
<reference key="1">
    <citation type="journal article" date="2012" name="BMC Microbiol.">
        <title>Genome sequence of Desulfitobacterium hafniense DCB-2, a Gram-positive anaerobe capable of dehalogenation and metal reduction.</title>
        <authorList>
            <person name="Kim S.H."/>
            <person name="Harzman C."/>
            <person name="Davis J.K."/>
            <person name="Hutcheson R."/>
            <person name="Broderick J.B."/>
            <person name="Marsh T.L."/>
            <person name="Tiedje J.M."/>
        </authorList>
    </citation>
    <scope>NUCLEOTIDE SEQUENCE [LARGE SCALE GENOMIC DNA]</scope>
    <source>
        <strain>DSM 10664 / DCB-2</strain>
    </source>
</reference>
<name>SPED_DESHD</name>
<organism>
    <name type="scientific">Desulfitobacterium hafniense (strain DSM 10664 / DCB-2)</name>
    <dbReference type="NCBI Taxonomy" id="272564"/>
    <lineage>
        <taxon>Bacteria</taxon>
        <taxon>Bacillati</taxon>
        <taxon>Bacillota</taxon>
        <taxon>Clostridia</taxon>
        <taxon>Eubacteriales</taxon>
        <taxon>Desulfitobacteriaceae</taxon>
        <taxon>Desulfitobacterium</taxon>
    </lineage>
</organism>
<keyword id="KW-0068">Autocatalytic cleavage</keyword>
<keyword id="KW-0210">Decarboxylase</keyword>
<keyword id="KW-0456">Lyase</keyword>
<keyword id="KW-0620">Polyamine biosynthesis</keyword>
<keyword id="KW-0670">Pyruvate</keyword>
<keyword id="KW-0949">S-adenosyl-L-methionine</keyword>
<keyword id="KW-0704">Schiff base</keyword>
<keyword id="KW-0745">Spermidine biosynthesis</keyword>
<keyword id="KW-0865">Zymogen</keyword>
<proteinExistence type="inferred from homology"/>
<accession>B8G177</accession>
<sequence length="276" mass="31849">MEVKPLKKLRLYGFNNLTKTLSFNMYDICYAKTPEHRDAYIQYIDEEYNAQRLTSIVTEVARIVGANILNIAKQDYDPQGASVTMLIAEEHLGPENPDNDPFSPVYTDKEGPLPDAVVAHLDKSHITVHTYPESHPHGGISTFRADIDVSTCGQISPLKALNFLIESFAPDIIVADYRVRGFTRDVDGKKVFIDHKINSIQNYVDRKYRDLYQMIDVTVFQEYIFHTKMILKDFDLDNYLFGTAKKELSINDKRKIKQRLKKEMAEIFYGKNMPRI</sequence>
<protein>
    <recommendedName>
        <fullName evidence="1">S-adenosylmethionine decarboxylase proenzyme</fullName>
        <shortName evidence="1">AdoMetDC</shortName>
        <shortName evidence="1">SAMDC</shortName>
        <ecNumber evidence="1">4.1.1.50</ecNumber>
    </recommendedName>
    <component>
        <recommendedName>
            <fullName evidence="1">S-adenosylmethionine decarboxylase beta chain</fullName>
        </recommendedName>
    </component>
    <component>
        <recommendedName>
            <fullName evidence="1">S-adenosylmethionine decarboxylase alpha chain</fullName>
        </recommendedName>
    </component>
</protein>
<gene>
    <name evidence="1" type="primary">speD</name>
    <name type="ordered locus">Dhaf_1235</name>
</gene>
<dbReference type="EC" id="4.1.1.50" evidence="1"/>
<dbReference type="EMBL" id="CP001336">
    <property type="protein sequence ID" value="ACL19292.1"/>
    <property type="molecule type" value="Genomic_DNA"/>
</dbReference>
<dbReference type="RefSeq" id="WP_015943306.1">
    <property type="nucleotide sequence ID" value="NC_011830.1"/>
</dbReference>
<dbReference type="KEGG" id="dhd:Dhaf_1235"/>
<dbReference type="HOGENOM" id="CLU_092007_0_0_9"/>
<dbReference type="UniPathway" id="UPA00331">
    <property type="reaction ID" value="UER00451"/>
</dbReference>
<dbReference type="Proteomes" id="UP000007726">
    <property type="component" value="Chromosome"/>
</dbReference>
<dbReference type="GO" id="GO:0005829">
    <property type="term" value="C:cytosol"/>
    <property type="evidence" value="ECO:0007669"/>
    <property type="project" value="TreeGrafter"/>
</dbReference>
<dbReference type="GO" id="GO:0004014">
    <property type="term" value="F:adenosylmethionine decarboxylase activity"/>
    <property type="evidence" value="ECO:0007669"/>
    <property type="project" value="UniProtKB-UniRule"/>
</dbReference>
<dbReference type="GO" id="GO:0008295">
    <property type="term" value="P:spermidine biosynthetic process"/>
    <property type="evidence" value="ECO:0007669"/>
    <property type="project" value="UniProtKB-UniRule"/>
</dbReference>
<dbReference type="Gene3D" id="3.60.90.10">
    <property type="entry name" value="S-adenosylmethionine decarboxylase"/>
    <property type="match status" value="1"/>
</dbReference>
<dbReference type="HAMAP" id="MF_00465">
    <property type="entry name" value="AdoMetDC_2"/>
    <property type="match status" value="1"/>
</dbReference>
<dbReference type="InterPro" id="IPR003826">
    <property type="entry name" value="AdoMetDC_fam_prok"/>
</dbReference>
<dbReference type="InterPro" id="IPR009165">
    <property type="entry name" value="S-AdoMet_deCO2ase_bac"/>
</dbReference>
<dbReference type="InterPro" id="IPR016067">
    <property type="entry name" value="S-AdoMet_deCO2ase_core"/>
</dbReference>
<dbReference type="NCBIfam" id="TIGR03331">
    <property type="entry name" value="SAM_DCase_Eco"/>
    <property type="match status" value="1"/>
</dbReference>
<dbReference type="PANTHER" id="PTHR33866">
    <property type="entry name" value="S-ADENOSYLMETHIONINE DECARBOXYLASE PROENZYME"/>
    <property type="match status" value="1"/>
</dbReference>
<dbReference type="PANTHER" id="PTHR33866:SF1">
    <property type="entry name" value="S-ADENOSYLMETHIONINE DECARBOXYLASE PROENZYME"/>
    <property type="match status" value="1"/>
</dbReference>
<dbReference type="Pfam" id="PF02675">
    <property type="entry name" value="AdoMet_dc"/>
    <property type="match status" value="1"/>
</dbReference>
<dbReference type="PIRSF" id="PIRSF001356">
    <property type="entry name" value="SAM_decarboxylas"/>
    <property type="match status" value="1"/>
</dbReference>
<dbReference type="SUPFAM" id="SSF56276">
    <property type="entry name" value="S-adenosylmethionine decarboxylase"/>
    <property type="match status" value="2"/>
</dbReference>